<keyword id="KW-0963">Cytoplasm</keyword>
<keyword id="KW-0903">Direct protein sequencing</keyword>
<keyword id="KW-0378">Hydrolase</keyword>
<keyword id="KW-0464">Manganese</keyword>
<keyword id="KW-0479">Metal-binding</keyword>
<gene>
    <name type="primary">ppaC</name>
</gene>
<reference key="1">
    <citation type="journal article" date="1998" name="Microbiology">
        <title>Bacillus subtilis ORF yybQ encodes a manganese-dependent inorganic pyrophosphatase with distinctive properties: the first of a new class of soluble pyrophosphatase?</title>
        <authorList>
            <person name="Young T.W."/>
            <person name="Kuhn N.J."/>
            <person name="Wadeson A."/>
            <person name="Ward S."/>
            <person name="Burges D."/>
            <person name="Cooke G.D."/>
        </authorList>
    </citation>
    <scope>PROTEIN SEQUENCE</scope>
</reference>
<feature type="chain" id="PRO_0000158569" description="Manganese-dependent inorganic pyrophosphatase">
    <location>
        <begin position="1"/>
        <end position="16" status="greater than"/>
    </location>
</feature>
<feature type="binding site" evidence="1">
    <location>
        <position position="8"/>
    </location>
    <ligand>
        <name>Mn(2+)</name>
        <dbReference type="ChEBI" id="CHEBI:29035"/>
        <label>1</label>
    </ligand>
</feature>
<feature type="binding site" evidence="1">
    <location>
        <position position="12"/>
    </location>
    <ligand>
        <name>Mn(2+)</name>
        <dbReference type="ChEBI" id="CHEBI:29035"/>
        <label>1</label>
    </ligand>
</feature>
<feature type="binding site" evidence="1">
    <location>
        <position position="14"/>
    </location>
    <ligand>
        <name>Mn(2+)</name>
        <dbReference type="ChEBI" id="CHEBI:29035"/>
        <label>2</label>
    </ligand>
</feature>
<feature type="non-terminal residue">
    <location>
        <position position="16"/>
    </location>
</feature>
<accession>P56948</accession>
<sequence>QKTLIFGHKNPDTDTI</sequence>
<evidence type="ECO:0000250" key="1"/>
<evidence type="ECO:0000305" key="2"/>
<name>PPAC_PRIMG</name>
<comment type="catalytic activity">
    <reaction>
        <text>diphosphate + H2O = 2 phosphate + H(+)</text>
        <dbReference type="Rhea" id="RHEA:24576"/>
        <dbReference type="ChEBI" id="CHEBI:15377"/>
        <dbReference type="ChEBI" id="CHEBI:15378"/>
        <dbReference type="ChEBI" id="CHEBI:33019"/>
        <dbReference type="ChEBI" id="CHEBI:43474"/>
        <dbReference type="EC" id="3.6.1.1"/>
    </reaction>
</comment>
<comment type="cofactor">
    <cofactor evidence="1">
        <name>Mn(2+)</name>
        <dbReference type="ChEBI" id="CHEBI:29035"/>
    </cofactor>
    <text evidence="1">Binds 2 manganese ions per subunit.</text>
</comment>
<comment type="subcellular location">
    <subcellularLocation>
        <location evidence="1">Cytoplasm</location>
    </subcellularLocation>
</comment>
<comment type="similarity">
    <text evidence="2">Belongs to the PPase class C family.</text>
</comment>
<protein>
    <recommendedName>
        <fullName>Manganese-dependent inorganic pyrophosphatase</fullName>
        <ecNumber>3.6.1.1</ecNumber>
    </recommendedName>
    <alternativeName>
        <fullName>Pyrophosphate phospho-hydrolase</fullName>
        <shortName>PPase</shortName>
    </alternativeName>
</protein>
<dbReference type="EC" id="3.6.1.1"/>
<dbReference type="STRING" id="1348908.GCA_000480335_03852"/>
<dbReference type="eggNOG" id="COG1227">
    <property type="taxonomic scope" value="Bacteria"/>
</dbReference>
<dbReference type="GO" id="GO:0005737">
    <property type="term" value="C:cytoplasm"/>
    <property type="evidence" value="ECO:0007669"/>
    <property type="project" value="UniProtKB-SubCell"/>
</dbReference>
<dbReference type="GO" id="GO:0004427">
    <property type="term" value="F:inorganic diphosphate phosphatase activity"/>
    <property type="evidence" value="ECO:0007669"/>
    <property type="project" value="UniProtKB-EC"/>
</dbReference>
<dbReference type="GO" id="GO:0046872">
    <property type="term" value="F:metal ion binding"/>
    <property type="evidence" value="ECO:0007669"/>
    <property type="project" value="UniProtKB-KW"/>
</dbReference>
<proteinExistence type="evidence at protein level"/>
<organism>
    <name type="scientific">Priestia megaterium</name>
    <name type="common">Bacillus megaterium</name>
    <dbReference type="NCBI Taxonomy" id="1404"/>
    <lineage>
        <taxon>Bacteria</taxon>
        <taxon>Bacillati</taxon>
        <taxon>Bacillota</taxon>
        <taxon>Bacilli</taxon>
        <taxon>Bacillales</taxon>
        <taxon>Bacillaceae</taxon>
        <taxon>Priestia</taxon>
    </lineage>
</organism>